<protein>
    <recommendedName>
        <fullName evidence="1">tRNA-specific 2-thiouridylase MnmA</fullName>
        <ecNumber evidence="1">2.8.1.13</ecNumber>
    </recommendedName>
</protein>
<organism>
    <name type="scientific">Dinoroseobacter shibae (strain DSM 16493 / NCIMB 14021 / DFL 12)</name>
    <dbReference type="NCBI Taxonomy" id="398580"/>
    <lineage>
        <taxon>Bacteria</taxon>
        <taxon>Pseudomonadati</taxon>
        <taxon>Pseudomonadota</taxon>
        <taxon>Alphaproteobacteria</taxon>
        <taxon>Rhodobacterales</taxon>
        <taxon>Roseobacteraceae</taxon>
        <taxon>Dinoroseobacter</taxon>
    </lineage>
</organism>
<name>MNMA_DINSH</name>
<feature type="chain" id="PRO_0000349619" description="tRNA-specific 2-thiouridylase MnmA">
    <location>
        <begin position="1"/>
        <end position="384"/>
    </location>
</feature>
<feature type="region of interest" description="Interaction with tRNA" evidence="1">
    <location>
        <begin position="169"/>
        <end position="171"/>
    </location>
</feature>
<feature type="active site" description="Nucleophile" evidence="1">
    <location>
        <position position="123"/>
    </location>
</feature>
<feature type="active site" description="Cysteine persulfide intermediate" evidence="1">
    <location>
        <position position="220"/>
    </location>
</feature>
<feature type="binding site" evidence="1">
    <location>
        <begin position="29"/>
        <end position="36"/>
    </location>
    <ligand>
        <name>ATP</name>
        <dbReference type="ChEBI" id="CHEBI:30616"/>
    </ligand>
</feature>
<feature type="binding site" evidence="1">
    <location>
        <position position="55"/>
    </location>
    <ligand>
        <name>ATP</name>
        <dbReference type="ChEBI" id="CHEBI:30616"/>
    </ligand>
</feature>
<feature type="binding site" evidence="1">
    <location>
        <position position="147"/>
    </location>
    <ligand>
        <name>ATP</name>
        <dbReference type="ChEBI" id="CHEBI:30616"/>
    </ligand>
</feature>
<feature type="site" description="Interaction with tRNA" evidence="1">
    <location>
        <position position="148"/>
    </location>
</feature>
<feature type="site" description="Interaction with tRNA" evidence="1">
    <location>
        <position position="362"/>
    </location>
</feature>
<feature type="disulfide bond" description="Alternate" evidence="1">
    <location>
        <begin position="123"/>
        <end position="220"/>
    </location>
</feature>
<comment type="function">
    <text evidence="1">Catalyzes the 2-thiolation of uridine at the wobble position (U34) of tRNA, leading to the formation of s(2)U34.</text>
</comment>
<comment type="catalytic activity">
    <reaction evidence="1">
        <text>S-sulfanyl-L-cysteinyl-[protein] + uridine(34) in tRNA + AH2 + ATP = 2-thiouridine(34) in tRNA + L-cysteinyl-[protein] + A + AMP + diphosphate + H(+)</text>
        <dbReference type="Rhea" id="RHEA:47032"/>
        <dbReference type="Rhea" id="RHEA-COMP:10131"/>
        <dbReference type="Rhea" id="RHEA-COMP:11726"/>
        <dbReference type="Rhea" id="RHEA-COMP:11727"/>
        <dbReference type="Rhea" id="RHEA-COMP:11728"/>
        <dbReference type="ChEBI" id="CHEBI:13193"/>
        <dbReference type="ChEBI" id="CHEBI:15378"/>
        <dbReference type="ChEBI" id="CHEBI:17499"/>
        <dbReference type="ChEBI" id="CHEBI:29950"/>
        <dbReference type="ChEBI" id="CHEBI:30616"/>
        <dbReference type="ChEBI" id="CHEBI:33019"/>
        <dbReference type="ChEBI" id="CHEBI:61963"/>
        <dbReference type="ChEBI" id="CHEBI:65315"/>
        <dbReference type="ChEBI" id="CHEBI:87170"/>
        <dbReference type="ChEBI" id="CHEBI:456215"/>
        <dbReference type="EC" id="2.8.1.13"/>
    </reaction>
</comment>
<comment type="subcellular location">
    <subcellularLocation>
        <location evidence="1">Cytoplasm</location>
    </subcellularLocation>
</comment>
<comment type="similarity">
    <text evidence="1">Belongs to the MnmA/TRMU family.</text>
</comment>
<dbReference type="EC" id="2.8.1.13" evidence="1"/>
<dbReference type="EMBL" id="CP000830">
    <property type="protein sequence ID" value="ABV93248.1"/>
    <property type="molecule type" value="Genomic_DNA"/>
</dbReference>
<dbReference type="RefSeq" id="WP_012178178.1">
    <property type="nucleotide sequence ID" value="NC_009952.1"/>
</dbReference>
<dbReference type="SMR" id="A8LK49"/>
<dbReference type="STRING" id="398580.Dshi_1506"/>
<dbReference type="KEGG" id="dsh:Dshi_1506"/>
<dbReference type="eggNOG" id="COG0482">
    <property type="taxonomic scope" value="Bacteria"/>
</dbReference>
<dbReference type="HOGENOM" id="CLU_035188_0_0_5"/>
<dbReference type="OrthoDB" id="9800696at2"/>
<dbReference type="Proteomes" id="UP000006833">
    <property type="component" value="Chromosome"/>
</dbReference>
<dbReference type="GO" id="GO:0005737">
    <property type="term" value="C:cytoplasm"/>
    <property type="evidence" value="ECO:0007669"/>
    <property type="project" value="UniProtKB-SubCell"/>
</dbReference>
<dbReference type="GO" id="GO:0005524">
    <property type="term" value="F:ATP binding"/>
    <property type="evidence" value="ECO:0007669"/>
    <property type="project" value="UniProtKB-KW"/>
</dbReference>
<dbReference type="GO" id="GO:0000049">
    <property type="term" value="F:tRNA binding"/>
    <property type="evidence" value="ECO:0007669"/>
    <property type="project" value="UniProtKB-KW"/>
</dbReference>
<dbReference type="GO" id="GO:0103016">
    <property type="term" value="F:tRNA-uridine 2-sulfurtransferase activity"/>
    <property type="evidence" value="ECO:0007669"/>
    <property type="project" value="UniProtKB-EC"/>
</dbReference>
<dbReference type="GO" id="GO:0002143">
    <property type="term" value="P:tRNA wobble position uridine thiolation"/>
    <property type="evidence" value="ECO:0007669"/>
    <property type="project" value="TreeGrafter"/>
</dbReference>
<dbReference type="CDD" id="cd01998">
    <property type="entry name" value="MnmA_TRMU-like"/>
    <property type="match status" value="1"/>
</dbReference>
<dbReference type="FunFam" id="2.30.30.280:FF:000001">
    <property type="entry name" value="tRNA-specific 2-thiouridylase MnmA"/>
    <property type="match status" value="1"/>
</dbReference>
<dbReference type="FunFam" id="3.40.50.620:FF:000115">
    <property type="entry name" value="tRNA-specific 2-thiouridylase MnmA"/>
    <property type="match status" value="1"/>
</dbReference>
<dbReference type="Gene3D" id="2.30.30.280">
    <property type="entry name" value="Adenine nucleotide alpha hydrolases-like domains"/>
    <property type="match status" value="1"/>
</dbReference>
<dbReference type="Gene3D" id="3.40.50.620">
    <property type="entry name" value="HUPs"/>
    <property type="match status" value="1"/>
</dbReference>
<dbReference type="Gene3D" id="2.40.30.10">
    <property type="entry name" value="Translation factors"/>
    <property type="match status" value="1"/>
</dbReference>
<dbReference type="HAMAP" id="MF_00144">
    <property type="entry name" value="tRNA_thiouridyl_MnmA"/>
    <property type="match status" value="1"/>
</dbReference>
<dbReference type="InterPro" id="IPR004506">
    <property type="entry name" value="MnmA-like"/>
</dbReference>
<dbReference type="InterPro" id="IPR046885">
    <property type="entry name" value="MnmA-like_C"/>
</dbReference>
<dbReference type="InterPro" id="IPR046884">
    <property type="entry name" value="MnmA-like_central"/>
</dbReference>
<dbReference type="InterPro" id="IPR023382">
    <property type="entry name" value="MnmA-like_central_sf"/>
</dbReference>
<dbReference type="InterPro" id="IPR014729">
    <property type="entry name" value="Rossmann-like_a/b/a_fold"/>
</dbReference>
<dbReference type="NCBIfam" id="NF001138">
    <property type="entry name" value="PRK00143.1"/>
    <property type="match status" value="1"/>
</dbReference>
<dbReference type="NCBIfam" id="TIGR00420">
    <property type="entry name" value="trmU"/>
    <property type="match status" value="1"/>
</dbReference>
<dbReference type="PANTHER" id="PTHR11933:SF5">
    <property type="entry name" value="MITOCHONDRIAL TRNA-SPECIFIC 2-THIOURIDYLASE 1"/>
    <property type="match status" value="1"/>
</dbReference>
<dbReference type="PANTHER" id="PTHR11933">
    <property type="entry name" value="TRNA 5-METHYLAMINOMETHYL-2-THIOURIDYLATE -METHYLTRANSFERASE"/>
    <property type="match status" value="1"/>
</dbReference>
<dbReference type="Pfam" id="PF03054">
    <property type="entry name" value="tRNA_Me_trans"/>
    <property type="match status" value="1"/>
</dbReference>
<dbReference type="Pfam" id="PF20258">
    <property type="entry name" value="tRNA_Me_trans_C"/>
    <property type="match status" value="1"/>
</dbReference>
<dbReference type="Pfam" id="PF20259">
    <property type="entry name" value="tRNA_Me_trans_M"/>
    <property type="match status" value="1"/>
</dbReference>
<dbReference type="SUPFAM" id="SSF52402">
    <property type="entry name" value="Adenine nucleotide alpha hydrolases-like"/>
    <property type="match status" value="1"/>
</dbReference>
<keyword id="KW-0067">ATP-binding</keyword>
<keyword id="KW-0963">Cytoplasm</keyword>
<keyword id="KW-1015">Disulfide bond</keyword>
<keyword id="KW-0547">Nucleotide-binding</keyword>
<keyword id="KW-1185">Reference proteome</keyword>
<keyword id="KW-0694">RNA-binding</keyword>
<keyword id="KW-0808">Transferase</keyword>
<keyword id="KW-0819">tRNA processing</keyword>
<keyword id="KW-0820">tRNA-binding</keyword>
<gene>
    <name evidence="1" type="primary">mnmA</name>
    <name type="ordered locus">Dshi_1506</name>
</gene>
<evidence type="ECO:0000255" key="1">
    <source>
        <dbReference type="HAMAP-Rule" id="MF_00144"/>
    </source>
</evidence>
<reference key="1">
    <citation type="journal article" date="2010" name="ISME J.">
        <title>The complete genome sequence of the algal symbiont Dinoroseobacter shibae: a hitchhiker's guide to life in the sea.</title>
        <authorList>
            <person name="Wagner-Dobler I."/>
            <person name="Ballhausen B."/>
            <person name="Berger M."/>
            <person name="Brinkhoff T."/>
            <person name="Buchholz I."/>
            <person name="Bunk B."/>
            <person name="Cypionka H."/>
            <person name="Daniel R."/>
            <person name="Drepper T."/>
            <person name="Gerdts G."/>
            <person name="Hahnke S."/>
            <person name="Han C."/>
            <person name="Jahn D."/>
            <person name="Kalhoefer D."/>
            <person name="Kiss H."/>
            <person name="Klenk H.P."/>
            <person name="Kyrpides N."/>
            <person name="Liebl W."/>
            <person name="Liesegang H."/>
            <person name="Meincke L."/>
            <person name="Pati A."/>
            <person name="Petersen J."/>
            <person name="Piekarski T."/>
            <person name="Pommerenke C."/>
            <person name="Pradella S."/>
            <person name="Pukall R."/>
            <person name="Rabus R."/>
            <person name="Stackebrandt E."/>
            <person name="Thole S."/>
            <person name="Thompson L."/>
            <person name="Tielen P."/>
            <person name="Tomasch J."/>
            <person name="von Jan M."/>
            <person name="Wanphrut N."/>
            <person name="Wichels A."/>
            <person name="Zech H."/>
            <person name="Simon M."/>
        </authorList>
    </citation>
    <scope>NUCLEOTIDE SEQUENCE [LARGE SCALE GENOMIC DNA]</scope>
    <source>
        <strain>DSM 16493 / NCIMB 14021 / DFL 12</strain>
    </source>
</reference>
<sequence>MTSATASLTPALNSLGFAKPPSETRVVVAMSGGVDSSVVAAELACEGYDVVGVTLQLYDHGAALAKKGACCAGRDIHDARRVAEEMGFPHYVLDYENTFREAVIDEFADSYLGGATPVPCIRCNERVKFKDLLETARDLEADCMATGHYIQRKMGPAKAELHSAADANRDQSYFLFSTTQEQLDYLRFPLGHLASKAETRALAAKHGLSVADKPDSQDICFVPNGDYASVIEKLRPGAGEPGEIVDMDGTVLGAHRGVIHYTIGQRRGLGIGGLETPLYVVKLDPDARRVIVGPKEALSTRHVPLREINWLGDAPLSSRAEWPIAVKVRSTRPPRDAILRPISDTEATVELLTPEEGVSPGQACVFYDPDGTRIFGGGWIWRGA</sequence>
<proteinExistence type="inferred from homology"/>
<accession>A8LK49</accession>